<sequence>MDDTSAHEKYPLLDLCAPVTPPRRRPKPRWARPKDRSKNDSDSRHSTGSSSSDSTPKPPPRKPLNEQVNHWTLQGPATVTLHVHTPSGTQVTLTVHL</sequence>
<dbReference type="EMBL" id="U31783">
    <property type="protein sequence ID" value="AAA79426.1"/>
    <property type="status" value="ALT_SEQ"/>
    <property type="molecule type" value="Genomic_DNA"/>
</dbReference>
<dbReference type="Proteomes" id="UP000009158">
    <property type="component" value="Genome"/>
</dbReference>
<dbReference type="GO" id="GO:0030430">
    <property type="term" value="C:host cell cytoplasm"/>
    <property type="evidence" value="ECO:0007669"/>
    <property type="project" value="UniProtKB-SubCell"/>
</dbReference>
<dbReference type="GO" id="GO:0042025">
    <property type="term" value="C:host cell nucleus"/>
    <property type="evidence" value="ECO:0007669"/>
    <property type="project" value="UniProtKB-SubCell"/>
</dbReference>
<dbReference type="GO" id="GO:0039592">
    <property type="term" value="P:symbiont-mediated arrest of host cell cycle during G2/M transition"/>
    <property type="evidence" value="ECO:0007669"/>
    <property type="project" value="UniProtKB-KW"/>
</dbReference>
<dbReference type="InterPro" id="IPR003861">
    <property type="entry name" value="Papilloma_E4"/>
</dbReference>
<dbReference type="Pfam" id="PF02711">
    <property type="entry name" value="Pap_E4"/>
    <property type="match status" value="1"/>
</dbReference>
<name>VE4_HPV28</name>
<gene>
    <name type="primary">E4</name>
</gene>
<evidence type="ECO:0000250" key="1">
    <source>
        <dbReference type="UniProtKB" id="P06922"/>
    </source>
</evidence>
<evidence type="ECO:0000256" key="2">
    <source>
        <dbReference type="SAM" id="MobiDB-lite"/>
    </source>
</evidence>
<evidence type="ECO:0000305" key="3"/>
<proteinExistence type="inferred from homology"/>
<accession>P51896</accession>
<keyword id="KW-0244">Early protein</keyword>
<keyword id="KW-1035">Host cytoplasm</keyword>
<keyword id="KW-1079">Host G2/M cell cycle arrest by virus</keyword>
<keyword id="KW-1048">Host nucleus</keyword>
<keyword id="KW-0945">Host-virus interaction</keyword>
<keyword id="KW-1121">Modulation of host cell cycle by virus</keyword>
<keyword id="KW-0597">Phosphoprotein</keyword>
<reference key="1">
    <citation type="submission" date="1995-10" db="EMBL/GenBank/DDBJ databases">
        <authorList>
            <person name="Delius H."/>
        </authorList>
    </citation>
    <scope>NUCLEOTIDE SEQUENCE [GENOMIC DNA]</scope>
</reference>
<protein>
    <recommendedName>
        <fullName>Protein E4</fullName>
    </recommendedName>
</protein>
<feature type="chain" id="PRO_0000133267" description="Protein E4">
    <location>
        <begin position="1"/>
        <end position="97"/>
    </location>
</feature>
<feature type="region of interest" description="Disordered" evidence="2">
    <location>
        <begin position="1"/>
        <end position="70"/>
    </location>
</feature>
<feature type="compositionally biased region" description="Basic and acidic residues" evidence="2">
    <location>
        <begin position="1"/>
        <end position="11"/>
    </location>
</feature>
<feature type="compositionally biased region" description="Basic residues" evidence="2">
    <location>
        <begin position="22"/>
        <end position="31"/>
    </location>
</feature>
<feature type="compositionally biased region" description="Basic and acidic residues" evidence="2">
    <location>
        <begin position="32"/>
        <end position="45"/>
    </location>
</feature>
<feature type="compositionally biased region" description="Low complexity" evidence="2">
    <location>
        <begin position="46"/>
        <end position="55"/>
    </location>
</feature>
<organism>
    <name type="scientific">Human papillomavirus 28</name>
    <dbReference type="NCBI Taxonomy" id="37111"/>
    <lineage>
        <taxon>Viruses</taxon>
        <taxon>Monodnaviria</taxon>
        <taxon>Shotokuvirae</taxon>
        <taxon>Cossaviricota</taxon>
        <taxon>Papovaviricetes</taxon>
        <taxon>Zurhausenvirales</taxon>
        <taxon>Papillomaviridae</taxon>
        <taxon>Firstpapillomavirinae</taxon>
        <taxon>Alphapapillomavirus</taxon>
        <taxon>Alphapapillomavirus 2</taxon>
    </lineage>
</organism>
<comment type="function">
    <text evidence="1">Contributes to multiple aspects of the viral life cycle including viral genome amplification, suppression of suprabasal cell differentiation and egress of newly formed virions. Induces host cell cycle arrest at the G2 phase by associating with and preventing the nuclear entry of host CDK1/cyclin B1 complexes. Inhibits cellular DNA replication by preventing loading of host replication licensing proteins MCM2 and MCM7 onto chromatin. Within the cytoplasm, associates with host kinase SRPK1, a splicing factor regulator, and inhibits its activity. Therefore, E4 favors expression of late viral transcripts by inhibiting SRPK1-mediated phosphorylation of host serine-arginine (SR) proteins that have critical roles in mRNA metabolism. Late in the infectious cycle, E4 also acts to diminish the integrity of the keratinocyte by disrupting the keratin cytoskeleton and inducing apoptosis through alteration of mitochondrial function to facilitate egress of the newly formed virions.</text>
</comment>
<comment type="subunit">
    <text evidence="1">Assembles into oligomeric complexes. Interacts with host CDK1. Interacts with host SRPK1; this interaction may favor expression of late viral transcripts. Interacts with host cytokeratin components KRT8 and KRT18.</text>
</comment>
<comment type="subcellular location">
    <subcellularLocation>
        <location evidence="1">Host cytoplasm</location>
    </subcellularLocation>
    <subcellularLocation>
        <location evidence="1">Host nucleus</location>
    </subcellularLocation>
</comment>
<comment type="PTM">
    <text evidence="1">Phosphorylated by host ERK. The phosphorylation triggers a structural change that enhances keratin binding and protein stability.</text>
</comment>
<comment type="miscellaneous">
    <text evidence="1">The major E4 form is first synthesized as an E1^E4 fusion protein from spliced E1^E4 transcripts, such that the first few amino acids of the E4 protein are derived from the N terminus of E1.</text>
</comment>
<comment type="similarity">
    <text evidence="3">Belongs to the papillomaviridae E4 protein family.</text>
</comment>
<comment type="sequence caution" evidence="3">
    <conflict type="erroneous initiation">
        <sequence resource="EMBL-CDS" id="AAA79426"/>
    </conflict>
</comment>
<organismHost>
    <name type="scientific">Homo sapiens</name>
    <name type="common">Human</name>
    <dbReference type="NCBI Taxonomy" id="9606"/>
</organismHost>